<gene>
    <name type="primary">WOX5</name>
    <name type="ordered locus">At3g11260</name>
    <name type="ORF">F11B9.18</name>
</gene>
<proteinExistence type="evidence at transcript level"/>
<evidence type="ECO:0000255" key="1">
    <source>
        <dbReference type="PROSITE-ProRule" id="PRU00108"/>
    </source>
</evidence>
<evidence type="ECO:0000256" key="2">
    <source>
        <dbReference type="SAM" id="MobiDB-lite"/>
    </source>
</evidence>
<evidence type="ECO:0000269" key="3">
    <source>
    </source>
</evidence>
<evidence type="ECO:0000269" key="4">
    <source>
    </source>
</evidence>
<evidence type="ECO:0000305" key="5"/>
<organism>
    <name type="scientific">Arabidopsis thaliana</name>
    <name type="common">Mouse-ear cress</name>
    <dbReference type="NCBI Taxonomy" id="3702"/>
    <lineage>
        <taxon>Eukaryota</taxon>
        <taxon>Viridiplantae</taxon>
        <taxon>Streptophyta</taxon>
        <taxon>Embryophyta</taxon>
        <taxon>Tracheophyta</taxon>
        <taxon>Spermatophyta</taxon>
        <taxon>Magnoliopsida</taxon>
        <taxon>eudicotyledons</taxon>
        <taxon>Gunneridae</taxon>
        <taxon>Pentapetalae</taxon>
        <taxon>rosids</taxon>
        <taxon>malvids</taxon>
        <taxon>Brassicales</taxon>
        <taxon>Brassicaceae</taxon>
        <taxon>Camelineae</taxon>
        <taxon>Arabidopsis</taxon>
    </lineage>
</organism>
<keyword id="KW-0217">Developmental protein</keyword>
<keyword id="KW-0238">DNA-binding</keyword>
<keyword id="KW-0371">Homeobox</keyword>
<keyword id="KW-0539">Nucleus</keyword>
<keyword id="KW-1185">Reference proteome</keyword>
<keyword id="KW-0804">Transcription</keyword>
<keyword id="KW-0805">Transcription regulation</keyword>
<accession>Q8H1D2</accession>
<accession>Q9C775</accession>
<name>WOX5_ARATH</name>
<comment type="function">
    <text evidence="4">Transcription factor, which may be involved in the specification and maintenance of the stem cells (QC cells) in the root apical meristem (RAM).</text>
</comment>
<comment type="subcellular location">
    <subcellularLocation>
        <location evidence="1">Nucleus</location>
    </subcellularLocation>
</comment>
<comment type="tissue specificity">
    <text evidence="3">Specifically expressed in the central cells of a quiescent center (QC) of the root.</text>
</comment>
<comment type="developmental stage">
    <text evidence="3">Specifically expressed in the hypophysis of the majority of early globular embryos, approximately one round of cell division after the 16-cell stage, but never at the 16-cell stage itself. After the division of the hypophysis, it is detected in the upper lens-shaped cell that gives rise to the QC, but not in the lower daughter cell that gives rise to the central root cap. Subsequently, in heart stage and bent cotyledon stage embryos, it is detected in the four cells of the QC, which are the direct descendants of the lens-shaped cell. Also expressed in patches of cells that appeared associated with the vascular primordium of the cotyledons. This expression is strongest in late heart stage embryos and then gradually decreases.</text>
</comment>
<comment type="disruption phenotype">
    <text evidence="4">Abnormal quiescent center (QC) in the root apical meristem (RAM) and defects in cell differentiation.</text>
</comment>
<comment type="similarity">
    <text evidence="5">Belongs to the WUS homeobox family.</text>
</comment>
<comment type="sequence caution" evidence="5">
    <conflict type="erroneous gene model prediction">
        <sequence resource="EMBL-CDS" id="AAG50976"/>
    </conflict>
</comment>
<feature type="chain" id="PRO_0000049371" description="WUSCHEL-related homeobox 5">
    <location>
        <begin position="1"/>
        <end position="182"/>
    </location>
</feature>
<feature type="DNA-binding region" description="Homeobox; WUS-type" evidence="1">
    <location>
        <begin position="20"/>
        <end position="84"/>
    </location>
</feature>
<feature type="region of interest" description="Disordered" evidence="2">
    <location>
        <begin position="1"/>
        <end position="24"/>
    </location>
</feature>
<dbReference type="EMBL" id="AY251398">
    <property type="protein sequence ID" value="AAP37136.1"/>
    <property type="molecule type" value="mRNA"/>
</dbReference>
<dbReference type="EMBL" id="AY150812">
    <property type="protein sequence ID" value="AAN64659.1"/>
    <property type="molecule type" value="mRNA"/>
</dbReference>
<dbReference type="EMBL" id="AC073395">
    <property type="protein sequence ID" value="AAG50976.1"/>
    <property type="status" value="ALT_SEQ"/>
    <property type="molecule type" value="Genomic_DNA"/>
</dbReference>
<dbReference type="EMBL" id="CP002686">
    <property type="protein sequence ID" value="AEE75021.1"/>
    <property type="molecule type" value="Genomic_DNA"/>
</dbReference>
<dbReference type="RefSeq" id="NP_187735.2">
    <property type="nucleotide sequence ID" value="NM_111961.4"/>
</dbReference>
<dbReference type="SMR" id="Q8H1D2"/>
<dbReference type="BioGRID" id="5631">
    <property type="interactions" value="32"/>
</dbReference>
<dbReference type="FunCoup" id="Q8H1D2">
    <property type="interactions" value="291"/>
</dbReference>
<dbReference type="IntAct" id="Q8H1D2">
    <property type="interactions" value="4"/>
</dbReference>
<dbReference type="STRING" id="3702.Q8H1D2"/>
<dbReference type="iPTMnet" id="Q8H1D2"/>
<dbReference type="PaxDb" id="3702-AT3G11260.1"/>
<dbReference type="ProteomicsDB" id="242644"/>
<dbReference type="EnsemblPlants" id="AT3G11260.1">
    <property type="protein sequence ID" value="AT3G11260.1"/>
    <property type="gene ID" value="AT3G11260"/>
</dbReference>
<dbReference type="GeneID" id="820297"/>
<dbReference type="Gramene" id="AT3G11260.1">
    <property type="protein sequence ID" value="AT3G11260.1"/>
    <property type="gene ID" value="AT3G11260"/>
</dbReference>
<dbReference type="KEGG" id="ath:AT3G11260"/>
<dbReference type="Araport" id="AT3G11260"/>
<dbReference type="TAIR" id="AT3G11260">
    <property type="gene designation" value="WOX5"/>
</dbReference>
<dbReference type="eggNOG" id="ENOG502RYVY">
    <property type="taxonomic scope" value="Eukaryota"/>
</dbReference>
<dbReference type="HOGENOM" id="CLU_070454_2_0_1"/>
<dbReference type="InParanoid" id="Q8H1D2"/>
<dbReference type="OMA" id="IACEPER"/>
<dbReference type="OrthoDB" id="1845355at2759"/>
<dbReference type="PhylomeDB" id="Q8H1D2"/>
<dbReference type="PRO" id="PR:Q8H1D2"/>
<dbReference type="Proteomes" id="UP000006548">
    <property type="component" value="Chromosome 3"/>
</dbReference>
<dbReference type="ExpressionAtlas" id="Q8H1D2">
    <property type="expression patterns" value="baseline and differential"/>
</dbReference>
<dbReference type="GO" id="GO:0005634">
    <property type="term" value="C:nucleus"/>
    <property type="evidence" value="ECO:0007669"/>
    <property type="project" value="UniProtKB-SubCell"/>
</dbReference>
<dbReference type="GO" id="GO:0003700">
    <property type="term" value="F:DNA-binding transcription factor activity"/>
    <property type="evidence" value="ECO:0000250"/>
    <property type="project" value="TAIR"/>
</dbReference>
<dbReference type="GO" id="GO:0043565">
    <property type="term" value="F:sequence-specific DNA binding"/>
    <property type="evidence" value="ECO:0000353"/>
    <property type="project" value="TAIR"/>
</dbReference>
<dbReference type="GO" id="GO:0010078">
    <property type="term" value="P:maintenance of root meristem identity"/>
    <property type="evidence" value="ECO:0000315"/>
    <property type="project" value="UniProtKB"/>
</dbReference>
<dbReference type="GO" id="GO:1902459">
    <property type="term" value="P:positive regulation of stem cell population maintenance"/>
    <property type="evidence" value="ECO:0000315"/>
    <property type="project" value="TAIR"/>
</dbReference>
<dbReference type="GO" id="GO:0009733">
    <property type="term" value="P:response to auxin"/>
    <property type="evidence" value="ECO:0000270"/>
    <property type="project" value="TAIR"/>
</dbReference>
<dbReference type="CDD" id="cd00086">
    <property type="entry name" value="homeodomain"/>
    <property type="match status" value="1"/>
</dbReference>
<dbReference type="FunFam" id="1.10.10.60:FF:000118">
    <property type="entry name" value="WUSCHEL-related homeobox 11"/>
    <property type="match status" value="1"/>
</dbReference>
<dbReference type="Gene3D" id="1.10.10.60">
    <property type="entry name" value="Homeodomain-like"/>
    <property type="match status" value="1"/>
</dbReference>
<dbReference type="InterPro" id="IPR001356">
    <property type="entry name" value="HD"/>
</dbReference>
<dbReference type="InterPro" id="IPR009057">
    <property type="entry name" value="Homeodomain-like_sf"/>
</dbReference>
<dbReference type="InterPro" id="IPR044555">
    <property type="entry name" value="WUSCHEL-like"/>
</dbReference>
<dbReference type="PANTHER" id="PTHR45940">
    <property type="entry name" value="WUSCHEL-RELATED HOMEOBOX 1-RELATED"/>
    <property type="match status" value="1"/>
</dbReference>
<dbReference type="PANTHER" id="PTHR45940:SF41">
    <property type="entry name" value="WUSCHEL-RELATED HOMEOBOX 5"/>
    <property type="match status" value="1"/>
</dbReference>
<dbReference type="Pfam" id="PF00046">
    <property type="entry name" value="Homeodomain"/>
    <property type="match status" value="1"/>
</dbReference>
<dbReference type="SMART" id="SM00389">
    <property type="entry name" value="HOX"/>
    <property type="match status" value="1"/>
</dbReference>
<dbReference type="SUPFAM" id="SSF46689">
    <property type="entry name" value="Homeodomain-like"/>
    <property type="match status" value="1"/>
</dbReference>
<dbReference type="PROSITE" id="PS50071">
    <property type="entry name" value="HOMEOBOX_2"/>
    <property type="match status" value="1"/>
</dbReference>
<sequence length="182" mass="21226">MSFSVKGRSLRGNNNGGTGTKCGRWNPTVEQLKILTDLFRAGLRTPTTDQIQKISTELSFYGKIESKNVFYWFQNHKARERQKRRKISIDFDHHHHQPSTRDVFEISEEDCQEEEKVIETLQLFPVNSFEDSNSKVDKMRARGNNQYREYIRETTTTSFSPYSSCGAEMEHPPPLDLRLSFL</sequence>
<protein>
    <recommendedName>
        <fullName>WUSCHEL-related homeobox 5</fullName>
    </recommendedName>
</protein>
<reference key="1">
    <citation type="journal article" date="2004" name="Development">
        <title>Expression dynamics of WOX genes mark cell fate decisions during early embryonic patterning in Arabidopsis thaliana.</title>
        <authorList>
            <person name="Haecker A."/>
            <person name="Gross-Hardt R."/>
            <person name="Geiges B."/>
            <person name="Sarkar A."/>
            <person name="Breuninger H."/>
            <person name="Herrmann M."/>
            <person name="Laux T."/>
        </authorList>
    </citation>
    <scope>NUCLEOTIDE SEQUENCE [MRNA]</scope>
    <scope>TISSUE SPECIFICITY</scope>
    <scope>DEVELOPMENTAL STAGE</scope>
    <source>
        <strain>cv. Landsberg erecta</strain>
    </source>
</reference>
<reference key="2">
    <citation type="submission" date="2002-09" db="EMBL/GenBank/DDBJ databases">
        <title>Homeodomain transcription factor, similar to wuschel protein.</title>
        <authorList>
            <person name="Fu C."/>
            <person name="Bush D.R."/>
            <person name="Martienssen R.A."/>
        </authorList>
    </citation>
    <scope>NUCLEOTIDE SEQUENCE [MRNA]</scope>
</reference>
<reference key="3">
    <citation type="journal article" date="2000" name="Nature">
        <title>Sequence and analysis of chromosome 3 of the plant Arabidopsis thaliana.</title>
        <authorList>
            <person name="Salanoubat M."/>
            <person name="Lemcke K."/>
            <person name="Rieger M."/>
            <person name="Ansorge W."/>
            <person name="Unseld M."/>
            <person name="Fartmann B."/>
            <person name="Valle G."/>
            <person name="Bloecker H."/>
            <person name="Perez-Alonso M."/>
            <person name="Obermaier B."/>
            <person name="Delseny M."/>
            <person name="Boutry M."/>
            <person name="Grivell L.A."/>
            <person name="Mache R."/>
            <person name="Puigdomenech P."/>
            <person name="De Simone V."/>
            <person name="Choisne N."/>
            <person name="Artiguenave F."/>
            <person name="Robert C."/>
            <person name="Brottier P."/>
            <person name="Wincker P."/>
            <person name="Cattolico L."/>
            <person name="Weissenbach J."/>
            <person name="Saurin W."/>
            <person name="Quetier F."/>
            <person name="Schaefer M."/>
            <person name="Mueller-Auer S."/>
            <person name="Gabel C."/>
            <person name="Fuchs M."/>
            <person name="Benes V."/>
            <person name="Wurmbach E."/>
            <person name="Drzonek H."/>
            <person name="Erfle H."/>
            <person name="Jordan N."/>
            <person name="Bangert S."/>
            <person name="Wiedelmann R."/>
            <person name="Kranz H."/>
            <person name="Voss H."/>
            <person name="Holland R."/>
            <person name="Brandt P."/>
            <person name="Nyakatura G."/>
            <person name="Vezzi A."/>
            <person name="D'Angelo M."/>
            <person name="Pallavicini A."/>
            <person name="Toppo S."/>
            <person name="Simionati B."/>
            <person name="Conrad A."/>
            <person name="Hornischer K."/>
            <person name="Kauer G."/>
            <person name="Loehnert T.-H."/>
            <person name="Nordsiek G."/>
            <person name="Reichelt J."/>
            <person name="Scharfe M."/>
            <person name="Schoen O."/>
            <person name="Bargues M."/>
            <person name="Terol J."/>
            <person name="Climent J."/>
            <person name="Navarro P."/>
            <person name="Collado C."/>
            <person name="Perez-Perez A."/>
            <person name="Ottenwaelder B."/>
            <person name="Duchemin D."/>
            <person name="Cooke R."/>
            <person name="Laudie M."/>
            <person name="Berger-Llauro C."/>
            <person name="Purnelle B."/>
            <person name="Masuy D."/>
            <person name="de Haan M."/>
            <person name="Maarse A.C."/>
            <person name="Alcaraz J.-P."/>
            <person name="Cottet A."/>
            <person name="Casacuberta E."/>
            <person name="Monfort A."/>
            <person name="Argiriou A."/>
            <person name="Flores M."/>
            <person name="Liguori R."/>
            <person name="Vitale D."/>
            <person name="Mannhaupt G."/>
            <person name="Haase D."/>
            <person name="Schoof H."/>
            <person name="Rudd S."/>
            <person name="Zaccaria P."/>
            <person name="Mewes H.-W."/>
            <person name="Mayer K.F.X."/>
            <person name="Kaul S."/>
            <person name="Town C.D."/>
            <person name="Koo H.L."/>
            <person name="Tallon L.J."/>
            <person name="Jenkins J."/>
            <person name="Rooney T."/>
            <person name="Rizzo M."/>
            <person name="Walts A."/>
            <person name="Utterback T."/>
            <person name="Fujii C.Y."/>
            <person name="Shea T.P."/>
            <person name="Creasy T.H."/>
            <person name="Haas B."/>
            <person name="Maiti R."/>
            <person name="Wu D."/>
            <person name="Peterson J."/>
            <person name="Van Aken S."/>
            <person name="Pai G."/>
            <person name="Militscher J."/>
            <person name="Sellers P."/>
            <person name="Gill J.E."/>
            <person name="Feldblyum T.V."/>
            <person name="Preuss D."/>
            <person name="Lin X."/>
            <person name="Nierman W.C."/>
            <person name="Salzberg S.L."/>
            <person name="White O."/>
            <person name="Venter J.C."/>
            <person name="Fraser C.M."/>
            <person name="Kaneko T."/>
            <person name="Nakamura Y."/>
            <person name="Sato S."/>
            <person name="Kato T."/>
            <person name="Asamizu E."/>
            <person name="Sasamoto S."/>
            <person name="Kimura T."/>
            <person name="Idesawa K."/>
            <person name="Kawashima K."/>
            <person name="Kishida Y."/>
            <person name="Kiyokawa C."/>
            <person name="Kohara M."/>
            <person name="Matsumoto M."/>
            <person name="Matsuno A."/>
            <person name="Muraki A."/>
            <person name="Nakayama S."/>
            <person name="Nakazaki N."/>
            <person name="Shinpo S."/>
            <person name="Takeuchi C."/>
            <person name="Wada T."/>
            <person name="Watanabe A."/>
            <person name="Yamada M."/>
            <person name="Yasuda M."/>
            <person name="Tabata S."/>
        </authorList>
    </citation>
    <scope>NUCLEOTIDE SEQUENCE [LARGE SCALE GENOMIC DNA]</scope>
    <source>
        <strain>cv. Columbia</strain>
    </source>
</reference>
<reference key="4">
    <citation type="journal article" date="2017" name="Plant J.">
        <title>Araport11: a complete reannotation of the Arabidopsis thaliana reference genome.</title>
        <authorList>
            <person name="Cheng C.Y."/>
            <person name="Krishnakumar V."/>
            <person name="Chan A.P."/>
            <person name="Thibaud-Nissen F."/>
            <person name="Schobel S."/>
            <person name="Town C.D."/>
        </authorList>
    </citation>
    <scope>GENOME REANNOTATION</scope>
    <source>
        <strain>cv. Columbia</strain>
    </source>
</reference>
<reference key="5">
    <citation type="journal article" date="2015" name="Nat. Commun.">
        <title>ROW1 maintains quiescent centre identity by confining WOX5 expression to specific cells.</title>
        <authorList>
            <person name="Zhang Y."/>
            <person name="Jiao Y."/>
            <person name="Liu Z."/>
            <person name="Zhu Y.-X."/>
        </authorList>
    </citation>
    <scope>FUNCTION</scope>
    <scope>DISRUPTION PHENOTYPE</scope>
    <source>
        <strain>cv. Columbia</strain>
    </source>
</reference>